<dbReference type="EMBL" id="CP000553">
    <property type="protein sequence ID" value="ABM76538.1"/>
    <property type="molecule type" value="Genomic_DNA"/>
</dbReference>
<dbReference type="RefSeq" id="WP_011824500.1">
    <property type="nucleotide sequence ID" value="NC_008819.1"/>
</dbReference>
<dbReference type="SMR" id="A2C4X8"/>
<dbReference type="KEGG" id="pme:NATL1_19821"/>
<dbReference type="eggNOG" id="COG0100">
    <property type="taxonomic scope" value="Bacteria"/>
</dbReference>
<dbReference type="HOGENOM" id="CLU_072439_5_0_3"/>
<dbReference type="Proteomes" id="UP000002592">
    <property type="component" value="Chromosome"/>
</dbReference>
<dbReference type="GO" id="GO:1990904">
    <property type="term" value="C:ribonucleoprotein complex"/>
    <property type="evidence" value="ECO:0007669"/>
    <property type="project" value="UniProtKB-KW"/>
</dbReference>
<dbReference type="GO" id="GO:0005840">
    <property type="term" value="C:ribosome"/>
    <property type="evidence" value="ECO:0007669"/>
    <property type="project" value="UniProtKB-KW"/>
</dbReference>
<dbReference type="GO" id="GO:0019843">
    <property type="term" value="F:rRNA binding"/>
    <property type="evidence" value="ECO:0007669"/>
    <property type="project" value="UniProtKB-UniRule"/>
</dbReference>
<dbReference type="GO" id="GO:0003735">
    <property type="term" value="F:structural constituent of ribosome"/>
    <property type="evidence" value="ECO:0007669"/>
    <property type="project" value="InterPro"/>
</dbReference>
<dbReference type="GO" id="GO:0006412">
    <property type="term" value="P:translation"/>
    <property type="evidence" value="ECO:0007669"/>
    <property type="project" value="UniProtKB-UniRule"/>
</dbReference>
<dbReference type="FunFam" id="3.30.420.80:FF:000001">
    <property type="entry name" value="30S ribosomal protein S11"/>
    <property type="match status" value="1"/>
</dbReference>
<dbReference type="Gene3D" id="3.30.420.80">
    <property type="entry name" value="Ribosomal protein S11"/>
    <property type="match status" value="1"/>
</dbReference>
<dbReference type="HAMAP" id="MF_01310">
    <property type="entry name" value="Ribosomal_uS11"/>
    <property type="match status" value="1"/>
</dbReference>
<dbReference type="InterPro" id="IPR001971">
    <property type="entry name" value="Ribosomal_uS11"/>
</dbReference>
<dbReference type="InterPro" id="IPR019981">
    <property type="entry name" value="Ribosomal_uS11_bac-type"/>
</dbReference>
<dbReference type="InterPro" id="IPR018102">
    <property type="entry name" value="Ribosomal_uS11_CS"/>
</dbReference>
<dbReference type="InterPro" id="IPR036967">
    <property type="entry name" value="Ribosomal_uS11_sf"/>
</dbReference>
<dbReference type="NCBIfam" id="NF003698">
    <property type="entry name" value="PRK05309.1"/>
    <property type="match status" value="1"/>
</dbReference>
<dbReference type="NCBIfam" id="TIGR03632">
    <property type="entry name" value="uS11_bact"/>
    <property type="match status" value="1"/>
</dbReference>
<dbReference type="PANTHER" id="PTHR11759">
    <property type="entry name" value="40S RIBOSOMAL PROTEIN S14/30S RIBOSOMAL PROTEIN S11"/>
    <property type="match status" value="1"/>
</dbReference>
<dbReference type="Pfam" id="PF00411">
    <property type="entry name" value="Ribosomal_S11"/>
    <property type="match status" value="1"/>
</dbReference>
<dbReference type="PIRSF" id="PIRSF002131">
    <property type="entry name" value="Ribosomal_S11"/>
    <property type="match status" value="1"/>
</dbReference>
<dbReference type="SUPFAM" id="SSF53137">
    <property type="entry name" value="Translational machinery components"/>
    <property type="match status" value="1"/>
</dbReference>
<dbReference type="PROSITE" id="PS00054">
    <property type="entry name" value="RIBOSOMAL_S11"/>
    <property type="match status" value="1"/>
</dbReference>
<feature type="chain" id="PRO_0000294824" description="Small ribosomal subunit protein uS11">
    <location>
        <begin position="1"/>
        <end position="130"/>
    </location>
</feature>
<protein>
    <recommendedName>
        <fullName evidence="1">Small ribosomal subunit protein uS11</fullName>
    </recommendedName>
    <alternativeName>
        <fullName evidence="2">30S ribosomal protein S11</fullName>
    </alternativeName>
</protein>
<sequence length="130" mass="13893">MATTSKKTGSKKSKRNVPNGVVHIQSTFNNTIVSITDTSGEVISWSSAGASGFKGARKGTPFAAQTAAELAARRALEQGMRQIEVLVRGPGSGRETAIRALQVAGLEITLIRDVTPLPHNGCRRPKRRRV</sequence>
<proteinExistence type="inferred from homology"/>
<keyword id="KW-0687">Ribonucleoprotein</keyword>
<keyword id="KW-0689">Ribosomal protein</keyword>
<keyword id="KW-0694">RNA-binding</keyword>
<keyword id="KW-0699">rRNA-binding</keyword>
<reference key="1">
    <citation type="journal article" date="2007" name="PLoS Genet.">
        <title>Patterns and implications of gene gain and loss in the evolution of Prochlorococcus.</title>
        <authorList>
            <person name="Kettler G.C."/>
            <person name="Martiny A.C."/>
            <person name="Huang K."/>
            <person name="Zucker J."/>
            <person name="Coleman M.L."/>
            <person name="Rodrigue S."/>
            <person name="Chen F."/>
            <person name="Lapidus A."/>
            <person name="Ferriera S."/>
            <person name="Johnson J."/>
            <person name="Steglich C."/>
            <person name="Church G.M."/>
            <person name="Richardson P."/>
            <person name="Chisholm S.W."/>
        </authorList>
    </citation>
    <scope>NUCLEOTIDE SEQUENCE [LARGE SCALE GENOMIC DNA]</scope>
    <source>
        <strain>NATL1A</strain>
    </source>
</reference>
<organism>
    <name type="scientific">Prochlorococcus marinus (strain NATL1A)</name>
    <dbReference type="NCBI Taxonomy" id="167555"/>
    <lineage>
        <taxon>Bacteria</taxon>
        <taxon>Bacillati</taxon>
        <taxon>Cyanobacteriota</taxon>
        <taxon>Cyanophyceae</taxon>
        <taxon>Synechococcales</taxon>
        <taxon>Prochlorococcaceae</taxon>
        <taxon>Prochlorococcus</taxon>
    </lineage>
</organism>
<comment type="function">
    <text evidence="1">Located on the platform of the 30S subunit, it bridges several disparate RNA helices of the 16S rRNA. Forms part of the Shine-Dalgarno cleft in the 70S ribosome.</text>
</comment>
<comment type="subunit">
    <text evidence="1">Part of the 30S ribosomal subunit. Interacts with proteins S7 and S18. Binds to IF-3.</text>
</comment>
<comment type="similarity">
    <text evidence="1">Belongs to the universal ribosomal protein uS11 family.</text>
</comment>
<evidence type="ECO:0000255" key="1">
    <source>
        <dbReference type="HAMAP-Rule" id="MF_01310"/>
    </source>
</evidence>
<evidence type="ECO:0000305" key="2"/>
<accession>A2C4X8</accession>
<name>RS11_PROM1</name>
<gene>
    <name evidence="1" type="primary">rpsK</name>
    <name evidence="1" type="synonym">rps11</name>
    <name type="ordered locus">NATL1_19821</name>
</gene>